<gene>
    <name type="ordered locus">At5g19150</name>
    <name type="ORF">T24G5</name>
</gene>
<proteinExistence type="evidence at protein level"/>
<dbReference type="EC" id="4.2.1.93" evidence="2"/>
<dbReference type="EMBL" id="AC069326">
    <property type="status" value="NOT_ANNOTATED_CDS"/>
    <property type="molecule type" value="Genomic_DNA"/>
</dbReference>
<dbReference type="EMBL" id="CP002688">
    <property type="protein sequence ID" value="AED92660.1"/>
    <property type="molecule type" value="Genomic_DNA"/>
</dbReference>
<dbReference type="EMBL" id="CP002688">
    <property type="protein sequence ID" value="AED92661.1"/>
    <property type="molecule type" value="Genomic_DNA"/>
</dbReference>
<dbReference type="EMBL" id="AY048225">
    <property type="protein sequence ID" value="AAK82488.1"/>
    <property type="molecule type" value="mRNA"/>
</dbReference>
<dbReference type="EMBL" id="AY101541">
    <property type="protein sequence ID" value="AAM26662.1"/>
    <property type="molecule type" value="mRNA"/>
</dbReference>
<dbReference type="RefSeq" id="NP_568369.1">
    <molecule id="Q94AF2-1"/>
    <property type="nucleotide sequence ID" value="NM_121920.4"/>
</dbReference>
<dbReference type="RefSeq" id="NP_974811.1">
    <molecule id="Q94AF2-1"/>
    <property type="nucleotide sequence ID" value="NM_203082.1"/>
</dbReference>
<dbReference type="SMR" id="Q94AF2"/>
<dbReference type="BioGRID" id="17311">
    <property type="interactions" value="3"/>
</dbReference>
<dbReference type="FunCoup" id="Q94AF2">
    <property type="interactions" value="1845"/>
</dbReference>
<dbReference type="IntAct" id="Q94AF2">
    <property type="interactions" value="3"/>
</dbReference>
<dbReference type="STRING" id="3702.Q94AF2"/>
<dbReference type="iPTMnet" id="Q94AF2"/>
<dbReference type="PaxDb" id="3702-AT5G19150.1"/>
<dbReference type="ProteomicsDB" id="251067">
    <molecule id="Q94AF2-1"/>
</dbReference>
<dbReference type="EnsemblPlants" id="AT5G19150.1">
    <molecule id="Q94AF2-1"/>
    <property type="protein sequence ID" value="AT5G19150.1"/>
    <property type="gene ID" value="AT5G19150"/>
</dbReference>
<dbReference type="EnsemblPlants" id="AT5G19150.2">
    <molecule id="Q94AF2-1"/>
    <property type="protein sequence ID" value="AT5G19150.2"/>
    <property type="gene ID" value="AT5G19150"/>
</dbReference>
<dbReference type="GeneID" id="832035"/>
<dbReference type="Gramene" id="AT5G19150.1">
    <molecule id="Q94AF2-1"/>
    <property type="protein sequence ID" value="AT5G19150.1"/>
    <property type="gene ID" value="AT5G19150"/>
</dbReference>
<dbReference type="Gramene" id="AT5G19150.2">
    <molecule id="Q94AF2-1"/>
    <property type="protein sequence ID" value="AT5G19150.2"/>
    <property type="gene ID" value="AT5G19150"/>
</dbReference>
<dbReference type="KEGG" id="ath:AT5G19150"/>
<dbReference type="Araport" id="AT5G19150"/>
<dbReference type="TAIR" id="AT5G19150"/>
<dbReference type="eggNOG" id="KOG3974">
    <property type="taxonomic scope" value="Eukaryota"/>
</dbReference>
<dbReference type="HOGENOM" id="CLU_030651_2_2_1"/>
<dbReference type="InParanoid" id="Q94AF2"/>
<dbReference type="OMA" id="WRAAYHN"/>
<dbReference type="PhylomeDB" id="Q94AF2"/>
<dbReference type="BRENDA" id="4.2.1.136">
    <property type="organism ID" value="399"/>
</dbReference>
<dbReference type="BRENDA" id="4.2.1.93">
    <property type="organism ID" value="399"/>
</dbReference>
<dbReference type="PRO" id="PR:Q94AF2"/>
<dbReference type="Proteomes" id="UP000006548">
    <property type="component" value="Chromosome 5"/>
</dbReference>
<dbReference type="ExpressionAtlas" id="Q94AF2">
    <property type="expression patterns" value="baseline and differential"/>
</dbReference>
<dbReference type="GO" id="GO:0009507">
    <property type="term" value="C:chloroplast"/>
    <property type="evidence" value="ECO:0000314"/>
    <property type="project" value="TAIR"/>
</dbReference>
<dbReference type="GO" id="GO:0005829">
    <property type="term" value="C:cytosol"/>
    <property type="evidence" value="ECO:0000314"/>
    <property type="project" value="TAIR"/>
</dbReference>
<dbReference type="GO" id="GO:0005739">
    <property type="term" value="C:mitochondrion"/>
    <property type="evidence" value="ECO:0000314"/>
    <property type="project" value="TAIR"/>
</dbReference>
<dbReference type="GO" id="GO:0005524">
    <property type="term" value="F:ATP binding"/>
    <property type="evidence" value="ECO:0007669"/>
    <property type="project" value="UniProtKB-KW"/>
</dbReference>
<dbReference type="GO" id="GO:0047453">
    <property type="term" value="F:ATP-dependent NAD(P)H-hydrate dehydratase activity"/>
    <property type="evidence" value="ECO:0000314"/>
    <property type="project" value="TAIR"/>
</dbReference>
<dbReference type="GO" id="GO:0006734">
    <property type="term" value="P:NADH metabolic process"/>
    <property type="evidence" value="ECO:0000315"/>
    <property type="project" value="TAIR"/>
</dbReference>
<dbReference type="GO" id="GO:0006739">
    <property type="term" value="P:NADP metabolic process"/>
    <property type="evidence" value="ECO:0000315"/>
    <property type="project" value="TAIR"/>
</dbReference>
<dbReference type="CDD" id="cd01171">
    <property type="entry name" value="YXKO-related"/>
    <property type="match status" value="1"/>
</dbReference>
<dbReference type="FunFam" id="3.40.1190.20:FF:000028">
    <property type="entry name" value="ATP-dependent (S)-NAD(P)H-hydrate dehydratase"/>
    <property type="match status" value="1"/>
</dbReference>
<dbReference type="Gene3D" id="3.40.1190.20">
    <property type="match status" value="1"/>
</dbReference>
<dbReference type="HAMAP" id="MF_01965">
    <property type="entry name" value="NADHX_dehydratase"/>
    <property type="match status" value="1"/>
</dbReference>
<dbReference type="InterPro" id="IPR000631">
    <property type="entry name" value="CARKD"/>
</dbReference>
<dbReference type="InterPro" id="IPR029056">
    <property type="entry name" value="Ribokinase-like"/>
</dbReference>
<dbReference type="NCBIfam" id="TIGR00196">
    <property type="entry name" value="yjeF_cterm"/>
    <property type="match status" value="1"/>
</dbReference>
<dbReference type="PANTHER" id="PTHR12592:SF0">
    <property type="entry name" value="ATP-DEPENDENT (S)-NAD(P)H-HYDRATE DEHYDRATASE"/>
    <property type="match status" value="1"/>
</dbReference>
<dbReference type="PANTHER" id="PTHR12592">
    <property type="entry name" value="ATP-DEPENDENT (S)-NAD(P)H-HYDRATE DEHYDRATASE FAMILY MEMBER"/>
    <property type="match status" value="1"/>
</dbReference>
<dbReference type="Pfam" id="PF01256">
    <property type="entry name" value="Carb_kinase"/>
    <property type="match status" value="1"/>
</dbReference>
<dbReference type="SUPFAM" id="SSF53613">
    <property type="entry name" value="Ribokinase-like"/>
    <property type="match status" value="1"/>
</dbReference>
<dbReference type="PROSITE" id="PS51383">
    <property type="entry name" value="YJEF_C_3"/>
    <property type="match status" value="1"/>
</dbReference>
<comment type="function">
    <text evidence="2">Catalyzes the dehydration of the S-form of NAD(P)HX at the expense of ATP, which is converted to ADP. Together with NAD(P)HX epimerase, which catalyzes the epimerization of the S- and R-forms, the enzyme allows the repair of both epimers of NAD(P)HX, a damaged form of NAD(P)H that is a result of enzymatic or heat-dependent hydration.</text>
</comment>
<comment type="catalytic activity">
    <reaction evidence="2">
        <text>(6S)-NADHX + ATP = ADP + phosphate + NADH + H(+)</text>
        <dbReference type="Rhea" id="RHEA:19017"/>
        <dbReference type="ChEBI" id="CHEBI:15378"/>
        <dbReference type="ChEBI" id="CHEBI:30616"/>
        <dbReference type="ChEBI" id="CHEBI:43474"/>
        <dbReference type="ChEBI" id="CHEBI:57945"/>
        <dbReference type="ChEBI" id="CHEBI:64074"/>
        <dbReference type="ChEBI" id="CHEBI:456216"/>
        <dbReference type="EC" id="4.2.1.93"/>
    </reaction>
</comment>
<comment type="catalytic activity">
    <reaction>
        <text>(6S)-NADPHX + ATP = ADP + phosphate + NADPH + H(+)</text>
        <dbReference type="Rhea" id="RHEA:32231"/>
        <dbReference type="ChEBI" id="CHEBI:15378"/>
        <dbReference type="ChEBI" id="CHEBI:30616"/>
        <dbReference type="ChEBI" id="CHEBI:43474"/>
        <dbReference type="ChEBI" id="CHEBI:57783"/>
        <dbReference type="ChEBI" id="CHEBI:64076"/>
        <dbReference type="ChEBI" id="CHEBI:456216"/>
        <dbReference type="EC" id="4.2.1.93"/>
    </reaction>
</comment>
<comment type="cofactor">
    <cofactor evidence="2">
        <name>Mg(2+)</name>
        <dbReference type="ChEBI" id="CHEBI:18420"/>
    </cofactor>
</comment>
<comment type="subcellular location">
    <molecule>Isoform 1</molecule>
    <subcellularLocation>
        <location evidence="1">Plastid</location>
        <location evidence="1">Chloroplast</location>
    </subcellularLocation>
</comment>
<comment type="subcellular location">
    <molecule>Isoform 2</molecule>
    <subcellularLocation>
        <location evidence="3">Cytoplasm</location>
    </subcellularLocation>
</comment>
<comment type="alternative products">
    <event type="alternative initiation"/>
    <isoform>
        <id>Q94AF2-1</id>
        <name>1</name>
        <sequence type="displayed"/>
    </isoform>
    <isoform>
        <id>Q94AF2-2</id>
        <name>2</name>
        <sequence type="described" ref="VSP_059336"/>
    </isoform>
</comment>
<comment type="miscellaneous">
    <molecule>Isoform 2</molecule>
    <text evidence="3">Produced by alternative initiation at Met-45 of isoform 1.</text>
</comment>
<comment type="similarity">
    <text evidence="2">Belongs to the NnrD/CARKD family.</text>
</comment>
<accession>Q94AF2</accession>
<evidence type="ECO:0000255" key="1"/>
<evidence type="ECO:0000255" key="2">
    <source>
        <dbReference type="HAMAP-Rule" id="MF_03157"/>
    </source>
</evidence>
<evidence type="ECO:0000305" key="3"/>
<evidence type="ECO:0007744" key="4">
    <source>
    </source>
</evidence>
<name>NNRD_ARATH</name>
<sequence length="365" mass="39269">MLVKPSIISGLVRLTSHSPSSSSSVLRRQEFLVRTLCGSPIIRAMSSTSEADAESVLRTVTPSLDLKRHKGQAGKIAVIGGCREYTGAPYFAAISALKIGADLSHVFCTKDAAPVIKSYSPELIVHPVLEESYSISQLSEEDKREVQDKVLGEVGKWMERFDCLVIGPGLGRDPFLLECVSIIMLLAKKSNVPFVIDGDGLFLVTNSIDLVHSYPLAVLTPNVNEYKRLVQKVLNCEVDEQNAEDQLRSLAKQIGGVTILRKGKSDLISNGETVKSVSIYGSPRRCGGQGDILSGGVAVFLSWAQQLKSDPESPSENPAILGCIAASGLLRKAASLAFTKHKRSTLTSDIIECLGESLEDICPAS</sequence>
<keyword id="KW-0007">Acetylation</keyword>
<keyword id="KW-0024">Alternative initiation</keyword>
<keyword id="KW-0067">ATP-binding</keyword>
<keyword id="KW-0150">Chloroplast</keyword>
<keyword id="KW-0963">Cytoplasm</keyword>
<keyword id="KW-0456">Lyase</keyword>
<keyword id="KW-0520">NAD</keyword>
<keyword id="KW-0521">NADP</keyword>
<keyword id="KW-0547">Nucleotide-binding</keyword>
<keyword id="KW-0934">Plastid</keyword>
<keyword id="KW-1185">Reference proteome</keyword>
<keyword id="KW-0809">Transit peptide</keyword>
<protein>
    <recommendedName>
        <fullName evidence="2">ATP-dependent (S)-NAD(P)H-hydrate dehydratase</fullName>
        <ecNumber evidence="2">4.2.1.93</ecNumber>
    </recommendedName>
    <alternativeName>
        <fullName evidence="2">ATP-dependent NAD(P)HX dehydratase</fullName>
    </alternativeName>
</protein>
<reference key="1">
    <citation type="journal article" date="2000" name="Nature">
        <title>Sequence and analysis of chromosome 5 of the plant Arabidopsis thaliana.</title>
        <authorList>
            <person name="Tabata S."/>
            <person name="Kaneko T."/>
            <person name="Nakamura Y."/>
            <person name="Kotani H."/>
            <person name="Kato T."/>
            <person name="Asamizu E."/>
            <person name="Miyajima N."/>
            <person name="Sasamoto S."/>
            <person name="Kimura T."/>
            <person name="Hosouchi T."/>
            <person name="Kawashima K."/>
            <person name="Kohara M."/>
            <person name="Matsumoto M."/>
            <person name="Matsuno A."/>
            <person name="Muraki A."/>
            <person name="Nakayama S."/>
            <person name="Nakazaki N."/>
            <person name="Naruo K."/>
            <person name="Okumura S."/>
            <person name="Shinpo S."/>
            <person name="Takeuchi C."/>
            <person name="Wada T."/>
            <person name="Watanabe A."/>
            <person name="Yamada M."/>
            <person name="Yasuda M."/>
            <person name="Sato S."/>
            <person name="de la Bastide M."/>
            <person name="Huang E."/>
            <person name="Spiegel L."/>
            <person name="Gnoj L."/>
            <person name="O'Shaughnessy A."/>
            <person name="Preston R."/>
            <person name="Habermann K."/>
            <person name="Murray J."/>
            <person name="Johnson D."/>
            <person name="Rohlfing T."/>
            <person name="Nelson J."/>
            <person name="Stoneking T."/>
            <person name="Pepin K."/>
            <person name="Spieth J."/>
            <person name="Sekhon M."/>
            <person name="Armstrong J."/>
            <person name="Becker M."/>
            <person name="Belter E."/>
            <person name="Cordum H."/>
            <person name="Cordes M."/>
            <person name="Courtney L."/>
            <person name="Courtney W."/>
            <person name="Dante M."/>
            <person name="Du H."/>
            <person name="Edwards J."/>
            <person name="Fryman J."/>
            <person name="Haakensen B."/>
            <person name="Lamar E."/>
            <person name="Latreille P."/>
            <person name="Leonard S."/>
            <person name="Meyer R."/>
            <person name="Mulvaney E."/>
            <person name="Ozersky P."/>
            <person name="Riley A."/>
            <person name="Strowmatt C."/>
            <person name="Wagner-McPherson C."/>
            <person name="Wollam A."/>
            <person name="Yoakum M."/>
            <person name="Bell M."/>
            <person name="Dedhia N."/>
            <person name="Parnell L."/>
            <person name="Shah R."/>
            <person name="Rodriguez M."/>
            <person name="Hoon See L."/>
            <person name="Vil D."/>
            <person name="Baker J."/>
            <person name="Kirchoff K."/>
            <person name="Toth K."/>
            <person name="King L."/>
            <person name="Bahret A."/>
            <person name="Miller B."/>
            <person name="Marra M.A."/>
            <person name="Martienssen R."/>
            <person name="McCombie W.R."/>
            <person name="Wilson R.K."/>
            <person name="Murphy G."/>
            <person name="Bancroft I."/>
            <person name="Volckaert G."/>
            <person name="Wambutt R."/>
            <person name="Duesterhoeft A."/>
            <person name="Stiekema W."/>
            <person name="Pohl T."/>
            <person name="Entian K.-D."/>
            <person name="Terryn N."/>
            <person name="Hartley N."/>
            <person name="Bent E."/>
            <person name="Johnson S."/>
            <person name="Langham S.-A."/>
            <person name="McCullagh B."/>
            <person name="Robben J."/>
            <person name="Grymonprez B."/>
            <person name="Zimmermann W."/>
            <person name="Ramsperger U."/>
            <person name="Wedler H."/>
            <person name="Balke K."/>
            <person name="Wedler E."/>
            <person name="Peters S."/>
            <person name="van Staveren M."/>
            <person name="Dirkse W."/>
            <person name="Mooijman P."/>
            <person name="Klein Lankhorst R."/>
            <person name="Weitzenegger T."/>
            <person name="Bothe G."/>
            <person name="Rose M."/>
            <person name="Hauf J."/>
            <person name="Berneiser S."/>
            <person name="Hempel S."/>
            <person name="Feldpausch M."/>
            <person name="Lamberth S."/>
            <person name="Villarroel R."/>
            <person name="Gielen J."/>
            <person name="Ardiles W."/>
            <person name="Bents O."/>
            <person name="Lemcke K."/>
            <person name="Kolesov G."/>
            <person name="Mayer K.F.X."/>
            <person name="Rudd S."/>
            <person name="Schoof H."/>
            <person name="Schueller C."/>
            <person name="Zaccaria P."/>
            <person name="Mewes H.-W."/>
            <person name="Bevan M."/>
            <person name="Fransz P.F."/>
        </authorList>
    </citation>
    <scope>NUCLEOTIDE SEQUENCE [LARGE SCALE GENOMIC DNA]</scope>
    <source>
        <strain>cv. Columbia</strain>
    </source>
</reference>
<reference key="2">
    <citation type="journal article" date="2017" name="Plant J.">
        <title>Araport11: a complete reannotation of the Arabidopsis thaliana reference genome.</title>
        <authorList>
            <person name="Cheng C.Y."/>
            <person name="Krishnakumar V."/>
            <person name="Chan A.P."/>
            <person name="Thibaud-Nissen F."/>
            <person name="Schobel S."/>
            <person name="Town C.D."/>
        </authorList>
    </citation>
    <scope>GENOME REANNOTATION</scope>
    <source>
        <strain>cv. Columbia</strain>
    </source>
</reference>
<reference key="3">
    <citation type="journal article" date="2003" name="Science">
        <title>Empirical analysis of transcriptional activity in the Arabidopsis genome.</title>
        <authorList>
            <person name="Yamada K."/>
            <person name="Lim J."/>
            <person name="Dale J.M."/>
            <person name="Chen H."/>
            <person name="Shinn P."/>
            <person name="Palm C.J."/>
            <person name="Southwick A.M."/>
            <person name="Wu H.C."/>
            <person name="Kim C.J."/>
            <person name="Nguyen M."/>
            <person name="Pham P.K."/>
            <person name="Cheuk R.F."/>
            <person name="Karlin-Newmann G."/>
            <person name="Liu S.X."/>
            <person name="Lam B."/>
            <person name="Sakano H."/>
            <person name="Wu T."/>
            <person name="Yu G."/>
            <person name="Miranda M."/>
            <person name="Quach H.L."/>
            <person name="Tripp M."/>
            <person name="Chang C.H."/>
            <person name="Lee J.M."/>
            <person name="Toriumi M.J."/>
            <person name="Chan M.M."/>
            <person name="Tang C.C."/>
            <person name="Onodera C.S."/>
            <person name="Deng J.M."/>
            <person name="Akiyama K."/>
            <person name="Ansari Y."/>
            <person name="Arakawa T."/>
            <person name="Banh J."/>
            <person name="Banno F."/>
            <person name="Bowser L."/>
            <person name="Brooks S.Y."/>
            <person name="Carninci P."/>
            <person name="Chao Q."/>
            <person name="Choy N."/>
            <person name="Enju A."/>
            <person name="Goldsmith A.D."/>
            <person name="Gurjal M."/>
            <person name="Hansen N.F."/>
            <person name="Hayashizaki Y."/>
            <person name="Johnson-Hopson C."/>
            <person name="Hsuan V.W."/>
            <person name="Iida K."/>
            <person name="Karnes M."/>
            <person name="Khan S."/>
            <person name="Koesema E."/>
            <person name="Ishida J."/>
            <person name="Jiang P.X."/>
            <person name="Jones T."/>
            <person name="Kawai J."/>
            <person name="Kamiya A."/>
            <person name="Meyers C."/>
            <person name="Nakajima M."/>
            <person name="Narusaka M."/>
            <person name="Seki M."/>
            <person name="Sakurai T."/>
            <person name="Satou M."/>
            <person name="Tamse R."/>
            <person name="Vaysberg M."/>
            <person name="Wallender E.K."/>
            <person name="Wong C."/>
            <person name="Yamamura Y."/>
            <person name="Yuan S."/>
            <person name="Shinozaki K."/>
            <person name="Davis R.W."/>
            <person name="Theologis A."/>
            <person name="Ecker J.R."/>
        </authorList>
    </citation>
    <scope>NUCLEOTIDE SEQUENCE [LARGE SCALE MRNA]</scope>
    <source>
        <strain>cv. Columbia</strain>
    </source>
</reference>
<reference key="4">
    <citation type="journal article" date="2012" name="Mol. Cell. Proteomics">
        <title>Comparative large-scale characterisation of plant vs. mammal proteins reveals similar and idiosyncratic N-alpha acetylation features.</title>
        <authorList>
            <person name="Bienvenut W.V."/>
            <person name="Sumpton D."/>
            <person name="Martinez A."/>
            <person name="Lilla S."/>
            <person name="Espagne C."/>
            <person name="Meinnel T."/>
            <person name="Giglione C."/>
        </authorList>
    </citation>
    <scope>ACETYLATION [LARGE SCALE ANALYSIS] AT SER-2 (ISOFORM 2)</scope>
    <scope>CLEAVAGE OF INITIATOR METHIONINE [LARGE SCALE ANALYSIS] (ISOFORM 2)</scope>
    <scope>IDENTIFICATION BY MASS SPECTROMETRY [LARGE SCALE ANALYSIS]</scope>
</reference>
<organism>
    <name type="scientific">Arabidopsis thaliana</name>
    <name type="common">Mouse-ear cress</name>
    <dbReference type="NCBI Taxonomy" id="3702"/>
    <lineage>
        <taxon>Eukaryota</taxon>
        <taxon>Viridiplantae</taxon>
        <taxon>Streptophyta</taxon>
        <taxon>Embryophyta</taxon>
        <taxon>Tracheophyta</taxon>
        <taxon>Spermatophyta</taxon>
        <taxon>Magnoliopsida</taxon>
        <taxon>eudicotyledons</taxon>
        <taxon>Gunneridae</taxon>
        <taxon>Pentapetalae</taxon>
        <taxon>rosids</taxon>
        <taxon>malvids</taxon>
        <taxon>Brassicales</taxon>
        <taxon>Brassicaceae</taxon>
        <taxon>Camelineae</taxon>
        <taxon>Arabidopsis</taxon>
    </lineage>
</organism>
<feature type="transit peptide" description="Chloroplast" evidence="1">
    <location>
        <begin position="1"/>
        <end position="43"/>
    </location>
</feature>
<feature type="chain" id="PRO_0000416173" description="ATP-dependent (S)-NAD(P)H-hydrate dehydratase">
    <location>
        <begin position="44"/>
        <end position="365"/>
    </location>
</feature>
<feature type="domain" description="YjeF C-terminal" evidence="2">
    <location>
        <begin position="53"/>
        <end position="361"/>
    </location>
</feature>
<feature type="binding site" evidence="2">
    <location>
        <position position="169"/>
    </location>
    <ligand>
        <name>(6S)-NADPHX</name>
        <dbReference type="ChEBI" id="CHEBI:64076"/>
    </ligand>
</feature>
<feature type="binding site" evidence="2">
    <location>
        <begin position="222"/>
        <end position="228"/>
    </location>
    <ligand>
        <name>(6S)-NADPHX</name>
        <dbReference type="ChEBI" id="CHEBI:64076"/>
    </ligand>
</feature>
<feature type="binding site" evidence="2">
    <location>
        <begin position="262"/>
        <end position="266"/>
    </location>
    <ligand>
        <name>ATP</name>
        <dbReference type="ChEBI" id="CHEBI:30616"/>
    </ligand>
</feature>
<feature type="binding site" evidence="2">
    <location>
        <begin position="281"/>
        <end position="290"/>
    </location>
    <ligand>
        <name>ATP</name>
        <dbReference type="ChEBI" id="CHEBI:30616"/>
    </ligand>
</feature>
<feature type="binding site" evidence="2">
    <location>
        <position position="291"/>
    </location>
    <ligand>
        <name>(6S)-NADPHX</name>
        <dbReference type="ChEBI" id="CHEBI:64076"/>
    </ligand>
</feature>
<feature type="splice variant" id="VSP_059336" description="In isoform 2." evidence="3">
    <location>
        <begin position="1"/>
        <end position="44"/>
    </location>
</feature>
<feature type="initiator methionine" description="Removed" evidence="4">
    <location sequence="Q94AF2-2">
        <position position="1"/>
    </location>
</feature>
<feature type="modified residue" description="N-acetylserine" evidence="4">
    <location sequence="Q94AF2-2">
        <position position="2"/>
    </location>
</feature>